<dbReference type="EMBL" id="CP000941">
    <property type="protein sequence ID" value="ACA11507.1"/>
    <property type="molecule type" value="Genomic_DNA"/>
</dbReference>
<dbReference type="RefSeq" id="WP_004086525.1">
    <property type="nucleotide sequence ID" value="NC_010513.1"/>
</dbReference>
<dbReference type="SMR" id="B0U5K3"/>
<dbReference type="KEGG" id="xfm:Xfasm12_0498"/>
<dbReference type="HOGENOM" id="CLU_144911_0_1_6"/>
<dbReference type="GO" id="GO:0005737">
    <property type="term" value="C:cytoplasm"/>
    <property type="evidence" value="ECO:0007669"/>
    <property type="project" value="UniProtKB-ARBA"/>
</dbReference>
<dbReference type="GO" id="GO:0015935">
    <property type="term" value="C:small ribosomal subunit"/>
    <property type="evidence" value="ECO:0007669"/>
    <property type="project" value="InterPro"/>
</dbReference>
<dbReference type="GO" id="GO:0019843">
    <property type="term" value="F:rRNA binding"/>
    <property type="evidence" value="ECO:0007669"/>
    <property type="project" value="UniProtKB-UniRule"/>
</dbReference>
<dbReference type="GO" id="GO:0003735">
    <property type="term" value="F:structural constituent of ribosome"/>
    <property type="evidence" value="ECO:0007669"/>
    <property type="project" value="InterPro"/>
</dbReference>
<dbReference type="GO" id="GO:0000028">
    <property type="term" value="P:ribosomal small subunit assembly"/>
    <property type="evidence" value="ECO:0007669"/>
    <property type="project" value="TreeGrafter"/>
</dbReference>
<dbReference type="GO" id="GO:0006412">
    <property type="term" value="P:translation"/>
    <property type="evidence" value="ECO:0007669"/>
    <property type="project" value="UniProtKB-UniRule"/>
</dbReference>
<dbReference type="FunFam" id="3.30.860.10:FF:000001">
    <property type="entry name" value="30S ribosomal protein S19"/>
    <property type="match status" value="1"/>
</dbReference>
<dbReference type="Gene3D" id="3.30.860.10">
    <property type="entry name" value="30s Ribosomal Protein S19, Chain A"/>
    <property type="match status" value="1"/>
</dbReference>
<dbReference type="HAMAP" id="MF_00531">
    <property type="entry name" value="Ribosomal_uS19"/>
    <property type="match status" value="1"/>
</dbReference>
<dbReference type="InterPro" id="IPR002222">
    <property type="entry name" value="Ribosomal_uS19"/>
</dbReference>
<dbReference type="InterPro" id="IPR005732">
    <property type="entry name" value="Ribosomal_uS19_bac-type"/>
</dbReference>
<dbReference type="InterPro" id="IPR020934">
    <property type="entry name" value="Ribosomal_uS19_CS"/>
</dbReference>
<dbReference type="InterPro" id="IPR023575">
    <property type="entry name" value="Ribosomal_uS19_SF"/>
</dbReference>
<dbReference type="NCBIfam" id="TIGR01050">
    <property type="entry name" value="rpsS_bact"/>
    <property type="match status" value="1"/>
</dbReference>
<dbReference type="PANTHER" id="PTHR11880">
    <property type="entry name" value="RIBOSOMAL PROTEIN S19P FAMILY MEMBER"/>
    <property type="match status" value="1"/>
</dbReference>
<dbReference type="PANTHER" id="PTHR11880:SF8">
    <property type="entry name" value="SMALL RIBOSOMAL SUBUNIT PROTEIN US19M"/>
    <property type="match status" value="1"/>
</dbReference>
<dbReference type="Pfam" id="PF00203">
    <property type="entry name" value="Ribosomal_S19"/>
    <property type="match status" value="1"/>
</dbReference>
<dbReference type="PIRSF" id="PIRSF002144">
    <property type="entry name" value="Ribosomal_S19"/>
    <property type="match status" value="1"/>
</dbReference>
<dbReference type="PRINTS" id="PR00975">
    <property type="entry name" value="RIBOSOMALS19"/>
</dbReference>
<dbReference type="SUPFAM" id="SSF54570">
    <property type="entry name" value="Ribosomal protein S19"/>
    <property type="match status" value="1"/>
</dbReference>
<dbReference type="PROSITE" id="PS00323">
    <property type="entry name" value="RIBOSOMAL_S19"/>
    <property type="match status" value="1"/>
</dbReference>
<protein>
    <recommendedName>
        <fullName evidence="1">Small ribosomal subunit protein uS19</fullName>
    </recommendedName>
    <alternativeName>
        <fullName evidence="2">30S ribosomal protein S19</fullName>
    </alternativeName>
</protein>
<evidence type="ECO:0000255" key="1">
    <source>
        <dbReference type="HAMAP-Rule" id="MF_00531"/>
    </source>
</evidence>
<evidence type="ECO:0000305" key="2"/>
<reference key="1">
    <citation type="journal article" date="2010" name="J. Bacteriol.">
        <title>Whole genome sequences of two Xylella fastidiosa strains (M12 and M23) causing almond leaf scorch disease in California.</title>
        <authorList>
            <person name="Chen J."/>
            <person name="Xie G."/>
            <person name="Han S."/>
            <person name="Chertkov O."/>
            <person name="Sims D."/>
            <person name="Civerolo E.L."/>
        </authorList>
    </citation>
    <scope>NUCLEOTIDE SEQUENCE [LARGE SCALE GENOMIC DNA]</scope>
    <source>
        <strain>M12</strain>
    </source>
</reference>
<gene>
    <name evidence="1" type="primary">rpsS</name>
    <name type="ordered locus">Xfasm12_0498</name>
</gene>
<feature type="chain" id="PRO_1000128062" description="Small ribosomal subunit protein uS19">
    <location>
        <begin position="1"/>
        <end position="89"/>
    </location>
</feature>
<name>RS19_XYLFM</name>
<accession>B0U5K3</accession>
<proteinExistence type="inferred from homology"/>
<sequence>MPRSTKKGPFFDHHLIKKVESAAGSKRPIKTCSRRSVILPQMVGHTIAIHNGKNYHPVVINENMVGHKLGEFSITRVFKGHGGDKKSGK</sequence>
<organism>
    <name type="scientific">Xylella fastidiosa (strain M12)</name>
    <dbReference type="NCBI Taxonomy" id="405440"/>
    <lineage>
        <taxon>Bacteria</taxon>
        <taxon>Pseudomonadati</taxon>
        <taxon>Pseudomonadota</taxon>
        <taxon>Gammaproteobacteria</taxon>
        <taxon>Lysobacterales</taxon>
        <taxon>Lysobacteraceae</taxon>
        <taxon>Xylella</taxon>
    </lineage>
</organism>
<keyword id="KW-0687">Ribonucleoprotein</keyword>
<keyword id="KW-0689">Ribosomal protein</keyword>
<keyword id="KW-0694">RNA-binding</keyword>
<keyword id="KW-0699">rRNA-binding</keyword>
<comment type="function">
    <text evidence="1">Protein S19 forms a complex with S13 that binds strongly to the 16S ribosomal RNA.</text>
</comment>
<comment type="similarity">
    <text evidence="1">Belongs to the universal ribosomal protein uS19 family.</text>
</comment>